<sequence length="318" mass="34708">MKPLKIIFAGTPDFAARHLQALIDSEHDVIATYTQPDRPAGRGKKLTASPVKALALEHAIPVFQPASLRNEEAQAELAALNADIMIVVAYGLILPKVVLDTPRLGCINVHGSILPRWRGAAPIQRALWAGDTETGVTIMQMDIGLDTGDMLLKTHLPIEATDTSASLYEKLAEQGPKALVQALIGLSDGSLKAQKQDETLANYAEKLSKEEARLDWNKSAKQLWQDIRAFNPWPVSYFEHQQSVIKVWQADYSAELCSQAPGTIIAATKQGIEIATAEGKLMIKTMQLPNKKPLDVADILNARGDWFTAGVCLNQEAN</sequence>
<dbReference type="EC" id="2.1.2.9" evidence="1"/>
<dbReference type="EMBL" id="CP000447">
    <property type="protein sequence ID" value="ABI69886.1"/>
    <property type="molecule type" value="Genomic_DNA"/>
</dbReference>
<dbReference type="RefSeq" id="WP_011635515.1">
    <property type="nucleotide sequence ID" value="NC_008345.1"/>
</dbReference>
<dbReference type="SMR" id="Q08A29"/>
<dbReference type="STRING" id="318167.Sfri_0023"/>
<dbReference type="KEGG" id="sfr:Sfri_0023"/>
<dbReference type="eggNOG" id="COG0223">
    <property type="taxonomic scope" value="Bacteria"/>
</dbReference>
<dbReference type="HOGENOM" id="CLU_033347_1_2_6"/>
<dbReference type="OrthoDB" id="9802815at2"/>
<dbReference type="Proteomes" id="UP000000684">
    <property type="component" value="Chromosome"/>
</dbReference>
<dbReference type="GO" id="GO:0005829">
    <property type="term" value="C:cytosol"/>
    <property type="evidence" value="ECO:0007669"/>
    <property type="project" value="TreeGrafter"/>
</dbReference>
<dbReference type="GO" id="GO:0004479">
    <property type="term" value="F:methionyl-tRNA formyltransferase activity"/>
    <property type="evidence" value="ECO:0007669"/>
    <property type="project" value="UniProtKB-UniRule"/>
</dbReference>
<dbReference type="CDD" id="cd08646">
    <property type="entry name" value="FMT_core_Met-tRNA-FMT_N"/>
    <property type="match status" value="1"/>
</dbReference>
<dbReference type="CDD" id="cd08704">
    <property type="entry name" value="Met_tRNA_FMT_C"/>
    <property type="match status" value="1"/>
</dbReference>
<dbReference type="FunFam" id="3.40.50.170:FF:000003">
    <property type="entry name" value="Methionyl-tRNA formyltransferase"/>
    <property type="match status" value="1"/>
</dbReference>
<dbReference type="Gene3D" id="3.10.25.10">
    <property type="entry name" value="Formyl transferase, C-terminal domain"/>
    <property type="match status" value="1"/>
</dbReference>
<dbReference type="Gene3D" id="3.40.50.170">
    <property type="entry name" value="Formyl transferase, N-terminal domain"/>
    <property type="match status" value="1"/>
</dbReference>
<dbReference type="HAMAP" id="MF_00182">
    <property type="entry name" value="Formyl_trans"/>
    <property type="match status" value="1"/>
</dbReference>
<dbReference type="InterPro" id="IPR005794">
    <property type="entry name" value="Fmt"/>
</dbReference>
<dbReference type="InterPro" id="IPR005793">
    <property type="entry name" value="Formyl_trans_C"/>
</dbReference>
<dbReference type="InterPro" id="IPR037022">
    <property type="entry name" value="Formyl_trans_C_sf"/>
</dbReference>
<dbReference type="InterPro" id="IPR002376">
    <property type="entry name" value="Formyl_transf_N"/>
</dbReference>
<dbReference type="InterPro" id="IPR036477">
    <property type="entry name" value="Formyl_transf_N_sf"/>
</dbReference>
<dbReference type="InterPro" id="IPR011034">
    <property type="entry name" value="Formyl_transferase-like_C_sf"/>
</dbReference>
<dbReference type="InterPro" id="IPR001555">
    <property type="entry name" value="GART_AS"/>
</dbReference>
<dbReference type="InterPro" id="IPR044135">
    <property type="entry name" value="Met-tRNA-FMT_C"/>
</dbReference>
<dbReference type="InterPro" id="IPR041711">
    <property type="entry name" value="Met-tRNA-FMT_N"/>
</dbReference>
<dbReference type="NCBIfam" id="TIGR00460">
    <property type="entry name" value="fmt"/>
    <property type="match status" value="1"/>
</dbReference>
<dbReference type="PANTHER" id="PTHR11138">
    <property type="entry name" value="METHIONYL-TRNA FORMYLTRANSFERASE"/>
    <property type="match status" value="1"/>
</dbReference>
<dbReference type="PANTHER" id="PTHR11138:SF5">
    <property type="entry name" value="METHIONYL-TRNA FORMYLTRANSFERASE, MITOCHONDRIAL"/>
    <property type="match status" value="1"/>
</dbReference>
<dbReference type="Pfam" id="PF02911">
    <property type="entry name" value="Formyl_trans_C"/>
    <property type="match status" value="1"/>
</dbReference>
<dbReference type="Pfam" id="PF00551">
    <property type="entry name" value="Formyl_trans_N"/>
    <property type="match status" value="1"/>
</dbReference>
<dbReference type="SUPFAM" id="SSF50486">
    <property type="entry name" value="FMT C-terminal domain-like"/>
    <property type="match status" value="1"/>
</dbReference>
<dbReference type="SUPFAM" id="SSF53328">
    <property type="entry name" value="Formyltransferase"/>
    <property type="match status" value="1"/>
</dbReference>
<dbReference type="PROSITE" id="PS00373">
    <property type="entry name" value="GART"/>
    <property type="match status" value="1"/>
</dbReference>
<comment type="function">
    <text evidence="1">Attaches a formyl group to the free amino group of methionyl-tRNA(fMet). The formyl group appears to play a dual role in the initiator identity of N-formylmethionyl-tRNA by promoting its recognition by IF2 and preventing the misappropriation of this tRNA by the elongation apparatus.</text>
</comment>
<comment type="catalytic activity">
    <reaction evidence="1">
        <text>L-methionyl-tRNA(fMet) + (6R)-10-formyltetrahydrofolate = N-formyl-L-methionyl-tRNA(fMet) + (6S)-5,6,7,8-tetrahydrofolate + H(+)</text>
        <dbReference type="Rhea" id="RHEA:24380"/>
        <dbReference type="Rhea" id="RHEA-COMP:9952"/>
        <dbReference type="Rhea" id="RHEA-COMP:9953"/>
        <dbReference type="ChEBI" id="CHEBI:15378"/>
        <dbReference type="ChEBI" id="CHEBI:57453"/>
        <dbReference type="ChEBI" id="CHEBI:78530"/>
        <dbReference type="ChEBI" id="CHEBI:78844"/>
        <dbReference type="ChEBI" id="CHEBI:195366"/>
        <dbReference type="EC" id="2.1.2.9"/>
    </reaction>
</comment>
<comment type="similarity">
    <text evidence="1">Belongs to the Fmt family.</text>
</comment>
<gene>
    <name evidence="1" type="primary">fmt</name>
    <name type="ordered locus">Sfri_0023</name>
</gene>
<proteinExistence type="inferred from homology"/>
<name>FMT_SHEFN</name>
<protein>
    <recommendedName>
        <fullName evidence="1">Methionyl-tRNA formyltransferase</fullName>
        <ecNumber evidence="1">2.1.2.9</ecNumber>
    </recommendedName>
</protein>
<feature type="chain" id="PRO_1000020155" description="Methionyl-tRNA formyltransferase">
    <location>
        <begin position="1"/>
        <end position="318"/>
    </location>
</feature>
<feature type="binding site" evidence="1">
    <location>
        <begin position="112"/>
        <end position="115"/>
    </location>
    <ligand>
        <name>(6S)-5,6,7,8-tetrahydrofolate</name>
        <dbReference type="ChEBI" id="CHEBI:57453"/>
    </ligand>
</feature>
<evidence type="ECO:0000255" key="1">
    <source>
        <dbReference type="HAMAP-Rule" id="MF_00182"/>
    </source>
</evidence>
<keyword id="KW-0648">Protein biosynthesis</keyword>
<keyword id="KW-1185">Reference proteome</keyword>
<keyword id="KW-0808">Transferase</keyword>
<accession>Q08A29</accession>
<organism>
    <name type="scientific">Shewanella frigidimarina (strain NCIMB 400)</name>
    <dbReference type="NCBI Taxonomy" id="318167"/>
    <lineage>
        <taxon>Bacteria</taxon>
        <taxon>Pseudomonadati</taxon>
        <taxon>Pseudomonadota</taxon>
        <taxon>Gammaproteobacteria</taxon>
        <taxon>Alteromonadales</taxon>
        <taxon>Shewanellaceae</taxon>
        <taxon>Shewanella</taxon>
    </lineage>
</organism>
<reference key="1">
    <citation type="submission" date="2006-08" db="EMBL/GenBank/DDBJ databases">
        <title>Complete sequence of Shewanella frigidimarina NCIMB 400.</title>
        <authorList>
            <consortium name="US DOE Joint Genome Institute"/>
            <person name="Copeland A."/>
            <person name="Lucas S."/>
            <person name="Lapidus A."/>
            <person name="Barry K."/>
            <person name="Detter J.C."/>
            <person name="Glavina del Rio T."/>
            <person name="Hammon N."/>
            <person name="Israni S."/>
            <person name="Dalin E."/>
            <person name="Tice H."/>
            <person name="Pitluck S."/>
            <person name="Fredrickson J.K."/>
            <person name="Kolker E."/>
            <person name="McCuel L.A."/>
            <person name="DiChristina T."/>
            <person name="Nealson K.H."/>
            <person name="Newman D."/>
            <person name="Tiedje J.M."/>
            <person name="Zhou J."/>
            <person name="Romine M.F."/>
            <person name="Culley D.E."/>
            <person name="Serres M."/>
            <person name="Chertkov O."/>
            <person name="Brettin T."/>
            <person name="Bruce D."/>
            <person name="Han C."/>
            <person name="Tapia R."/>
            <person name="Gilna P."/>
            <person name="Schmutz J."/>
            <person name="Larimer F."/>
            <person name="Land M."/>
            <person name="Hauser L."/>
            <person name="Kyrpides N."/>
            <person name="Mikhailova N."/>
            <person name="Richardson P."/>
        </authorList>
    </citation>
    <scope>NUCLEOTIDE SEQUENCE [LARGE SCALE GENOMIC DNA]</scope>
    <source>
        <strain>NCIMB 400</strain>
    </source>
</reference>